<gene>
    <name evidence="1" type="primary">murC</name>
    <name type="ordered locus">Arth_1571</name>
</gene>
<organism>
    <name type="scientific">Arthrobacter sp. (strain FB24)</name>
    <dbReference type="NCBI Taxonomy" id="290399"/>
    <lineage>
        <taxon>Bacteria</taxon>
        <taxon>Bacillati</taxon>
        <taxon>Actinomycetota</taxon>
        <taxon>Actinomycetes</taxon>
        <taxon>Micrococcales</taxon>
        <taxon>Micrococcaceae</taxon>
        <taxon>Arthrobacter</taxon>
    </lineage>
</organism>
<comment type="function">
    <text evidence="1">Cell wall formation.</text>
</comment>
<comment type="catalytic activity">
    <reaction evidence="1">
        <text>UDP-N-acetyl-alpha-D-muramate + L-alanine + ATP = UDP-N-acetyl-alpha-D-muramoyl-L-alanine + ADP + phosphate + H(+)</text>
        <dbReference type="Rhea" id="RHEA:23372"/>
        <dbReference type="ChEBI" id="CHEBI:15378"/>
        <dbReference type="ChEBI" id="CHEBI:30616"/>
        <dbReference type="ChEBI" id="CHEBI:43474"/>
        <dbReference type="ChEBI" id="CHEBI:57972"/>
        <dbReference type="ChEBI" id="CHEBI:70757"/>
        <dbReference type="ChEBI" id="CHEBI:83898"/>
        <dbReference type="ChEBI" id="CHEBI:456216"/>
        <dbReference type="EC" id="6.3.2.8"/>
    </reaction>
</comment>
<comment type="pathway">
    <text evidence="1">Cell wall biogenesis; peptidoglycan biosynthesis.</text>
</comment>
<comment type="subcellular location">
    <subcellularLocation>
        <location evidence="1">Cytoplasm</location>
    </subcellularLocation>
</comment>
<comment type="similarity">
    <text evidence="1">Belongs to the MurCDEF family.</text>
</comment>
<accession>A0JV95</accession>
<protein>
    <recommendedName>
        <fullName evidence="1">UDP-N-acetylmuramate--L-alanine ligase</fullName>
        <ecNumber evidence="1">6.3.2.8</ecNumber>
    </recommendedName>
    <alternativeName>
        <fullName evidence="1">UDP-N-acetylmuramoyl-L-alanine synthetase</fullName>
    </alternativeName>
</protein>
<sequence length="467" mass="47584">MTMSTARTAVRSLESLGRVHFIGIGGVGMSAVARIMVARGVPVTGSDAKDLPVMADLAAAGAGIHVGYSAGNLGAAEAVVAGSAIRADNPELQAARAAGLPVLHRSEALAAAMAGDRVVTVAGTHGKSTTTSMVTVLLQGAGLDPTFAIGANVPSLGVNAASGTSDIFVAEADESDGSFLNYRPHIAVVTNVEPDHLDYYGTAEAVYESFDSFTELLPADGVLVACADDPGARALAERTRTRGNTRVVTYGTAEDAQLRLHDGGPGDVWVSTGAGRFALDLQVPGRHNALNAAAAFAVALELGVAPDAASGALAHFSGASRRFEFKGEGRGVRVYDDYAHHPTEVRAALAAARSVAGDHKVHVLFQPHLFSRTREFAADFAEALNAADTALVLDIYPAREDPIPGVSSKLIGDRLSAGGRLVAAEDAVRAVVANAAAGDIVLTAGAGDVTAYGPLIVEALLAEAPGG</sequence>
<name>MURC_ARTS2</name>
<feature type="chain" id="PRO_0000336813" description="UDP-N-acetylmuramate--L-alanine ligase">
    <location>
        <begin position="1"/>
        <end position="467"/>
    </location>
</feature>
<feature type="binding site" evidence="1">
    <location>
        <begin position="123"/>
        <end position="129"/>
    </location>
    <ligand>
        <name>ATP</name>
        <dbReference type="ChEBI" id="CHEBI:30616"/>
    </ligand>
</feature>
<evidence type="ECO:0000255" key="1">
    <source>
        <dbReference type="HAMAP-Rule" id="MF_00046"/>
    </source>
</evidence>
<reference key="1">
    <citation type="journal article" date="2013" name="Stand. Genomic Sci.">
        <title>Complete genome sequence of Arthrobacter sp. strain FB24.</title>
        <authorList>
            <person name="Nakatsu C.H."/>
            <person name="Barabote R."/>
            <person name="Thompson S."/>
            <person name="Bruce D."/>
            <person name="Detter C."/>
            <person name="Brettin T."/>
            <person name="Han C."/>
            <person name="Beasley F."/>
            <person name="Chen W."/>
            <person name="Konopka A."/>
            <person name="Xie G."/>
        </authorList>
    </citation>
    <scope>NUCLEOTIDE SEQUENCE [LARGE SCALE GENOMIC DNA]</scope>
    <source>
        <strain>FB24</strain>
    </source>
</reference>
<proteinExistence type="inferred from homology"/>
<dbReference type="EC" id="6.3.2.8" evidence="1"/>
<dbReference type="EMBL" id="CP000454">
    <property type="protein sequence ID" value="ABK02965.1"/>
    <property type="molecule type" value="Genomic_DNA"/>
</dbReference>
<dbReference type="RefSeq" id="WP_011691431.1">
    <property type="nucleotide sequence ID" value="NC_008541.1"/>
</dbReference>
<dbReference type="SMR" id="A0JV95"/>
<dbReference type="STRING" id="290399.Arth_1571"/>
<dbReference type="KEGG" id="art:Arth_1571"/>
<dbReference type="eggNOG" id="COG0773">
    <property type="taxonomic scope" value="Bacteria"/>
</dbReference>
<dbReference type="HOGENOM" id="CLU_028104_2_1_11"/>
<dbReference type="OrthoDB" id="9804126at2"/>
<dbReference type="UniPathway" id="UPA00219"/>
<dbReference type="Proteomes" id="UP000000754">
    <property type="component" value="Chromosome"/>
</dbReference>
<dbReference type="GO" id="GO:0005737">
    <property type="term" value="C:cytoplasm"/>
    <property type="evidence" value="ECO:0007669"/>
    <property type="project" value="UniProtKB-SubCell"/>
</dbReference>
<dbReference type="GO" id="GO:0005524">
    <property type="term" value="F:ATP binding"/>
    <property type="evidence" value="ECO:0007669"/>
    <property type="project" value="UniProtKB-UniRule"/>
</dbReference>
<dbReference type="GO" id="GO:0008763">
    <property type="term" value="F:UDP-N-acetylmuramate-L-alanine ligase activity"/>
    <property type="evidence" value="ECO:0007669"/>
    <property type="project" value="UniProtKB-UniRule"/>
</dbReference>
<dbReference type="GO" id="GO:0051301">
    <property type="term" value="P:cell division"/>
    <property type="evidence" value="ECO:0007669"/>
    <property type="project" value="UniProtKB-KW"/>
</dbReference>
<dbReference type="GO" id="GO:0071555">
    <property type="term" value="P:cell wall organization"/>
    <property type="evidence" value="ECO:0007669"/>
    <property type="project" value="UniProtKB-KW"/>
</dbReference>
<dbReference type="GO" id="GO:0009252">
    <property type="term" value="P:peptidoglycan biosynthetic process"/>
    <property type="evidence" value="ECO:0007669"/>
    <property type="project" value="UniProtKB-UniRule"/>
</dbReference>
<dbReference type="GO" id="GO:0008360">
    <property type="term" value="P:regulation of cell shape"/>
    <property type="evidence" value="ECO:0007669"/>
    <property type="project" value="UniProtKB-KW"/>
</dbReference>
<dbReference type="Gene3D" id="3.90.190.20">
    <property type="entry name" value="Mur ligase, C-terminal domain"/>
    <property type="match status" value="1"/>
</dbReference>
<dbReference type="Gene3D" id="3.40.1190.10">
    <property type="entry name" value="Mur-like, catalytic domain"/>
    <property type="match status" value="1"/>
</dbReference>
<dbReference type="Gene3D" id="3.40.50.720">
    <property type="entry name" value="NAD(P)-binding Rossmann-like Domain"/>
    <property type="match status" value="1"/>
</dbReference>
<dbReference type="HAMAP" id="MF_00046">
    <property type="entry name" value="MurC"/>
    <property type="match status" value="1"/>
</dbReference>
<dbReference type="InterPro" id="IPR036565">
    <property type="entry name" value="Mur-like_cat_sf"/>
</dbReference>
<dbReference type="InterPro" id="IPR004101">
    <property type="entry name" value="Mur_ligase_C"/>
</dbReference>
<dbReference type="InterPro" id="IPR036615">
    <property type="entry name" value="Mur_ligase_C_dom_sf"/>
</dbReference>
<dbReference type="InterPro" id="IPR013221">
    <property type="entry name" value="Mur_ligase_cen"/>
</dbReference>
<dbReference type="InterPro" id="IPR000713">
    <property type="entry name" value="Mur_ligase_N"/>
</dbReference>
<dbReference type="InterPro" id="IPR050061">
    <property type="entry name" value="MurCDEF_pg_biosynth"/>
</dbReference>
<dbReference type="InterPro" id="IPR005758">
    <property type="entry name" value="UDP-N-AcMur_Ala_ligase_MurC"/>
</dbReference>
<dbReference type="NCBIfam" id="TIGR01082">
    <property type="entry name" value="murC"/>
    <property type="match status" value="1"/>
</dbReference>
<dbReference type="PANTHER" id="PTHR43445:SF3">
    <property type="entry name" value="UDP-N-ACETYLMURAMATE--L-ALANINE LIGASE"/>
    <property type="match status" value="1"/>
</dbReference>
<dbReference type="PANTHER" id="PTHR43445">
    <property type="entry name" value="UDP-N-ACETYLMURAMATE--L-ALANINE LIGASE-RELATED"/>
    <property type="match status" value="1"/>
</dbReference>
<dbReference type="Pfam" id="PF01225">
    <property type="entry name" value="Mur_ligase"/>
    <property type="match status" value="1"/>
</dbReference>
<dbReference type="Pfam" id="PF02875">
    <property type="entry name" value="Mur_ligase_C"/>
    <property type="match status" value="1"/>
</dbReference>
<dbReference type="Pfam" id="PF08245">
    <property type="entry name" value="Mur_ligase_M"/>
    <property type="match status" value="1"/>
</dbReference>
<dbReference type="SUPFAM" id="SSF51984">
    <property type="entry name" value="MurCD N-terminal domain"/>
    <property type="match status" value="1"/>
</dbReference>
<dbReference type="SUPFAM" id="SSF53623">
    <property type="entry name" value="MurD-like peptide ligases, catalytic domain"/>
    <property type="match status" value="1"/>
</dbReference>
<dbReference type="SUPFAM" id="SSF53244">
    <property type="entry name" value="MurD-like peptide ligases, peptide-binding domain"/>
    <property type="match status" value="1"/>
</dbReference>
<keyword id="KW-0067">ATP-binding</keyword>
<keyword id="KW-0131">Cell cycle</keyword>
<keyword id="KW-0132">Cell division</keyword>
<keyword id="KW-0133">Cell shape</keyword>
<keyword id="KW-0961">Cell wall biogenesis/degradation</keyword>
<keyword id="KW-0963">Cytoplasm</keyword>
<keyword id="KW-0436">Ligase</keyword>
<keyword id="KW-0547">Nucleotide-binding</keyword>
<keyword id="KW-0573">Peptidoglycan synthesis</keyword>
<keyword id="KW-1185">Reference proteome</keyword>